<comment type="function">
    <text evidence="1">Allows the formation of correctly charged Gln-tRNA(Gln) through the transamidation of misacylated Glu-tRNA(Gln) in organisms which lack glutaminyl-tRNA synthetase. The reaction takes place in the presence of glutamine and ATP through an activated gamma-phospho-Glu-tRNA(Gln). The GatDE system is specific for glutamate and does not act on aspartate.</text>
</comment>
<comment type="catalytic activity">
    <reaction evidence="1">
        <text>L-glutamyl-tRNA(Gln) + L-glutamine + ATP + H2O = L-glutaminyl-tRNA(Gln) + L-glutamate + ADP + phosphate + H(+)</text>
        <dbReference type="Rhea" id="RHEA:17521"/>
        <dbReference type="Rhea" id="RHEA-COMP:9681"/>
        <dbReference type="Rhea" id="RHEA-COMP:9684"/>
        <dbReference type="ChEBI" id="CHEBI:15377"/>
        <dbReference type="ChEBI" id="CHEBI:15378"/>
        <dbReference type="ChEBI" id="CHEBI:29985"/>
        <dbReference type="ChEBI" id="CHEBI:30616"/>
        <dbReference type="ChEBI" id="CHEBI:43474"/>
        <dbReference type="ChEBI" id="CHEBI:58359"/>
        <dbReference type="ChEBI" id="CHEBI:78520"/>
        <dbReference type="ChEBI" id="CHEBI:78521"/>
        <dbReference type="ChEBI" id="CHEBI:456216"/>
    </reaction>
</comment>
<comment type="subunit">
    <text evidence="1">Heterodimer of GatD and GatE.</text>
</comment>
<comment type="similarity">
    <text evidence="1">Belongs to the GatB/GatE family. GatE subfamily.</text>
</comment>
<evidence type="ECO:0000255" key="1">
    <source>
        <dbReference type="HAMAP-Rule" id="MF_00588"/>
    </source>
</evidence>
<evidence type="ECO:0000256" key="2">
    <source>
        <dbReference type="SAM" id="MobiDB-lite"/>
    </source>
</evidence>
<accession>B1YAJ4</accession>
<organism>
    <name type="scientific">Pyrobaculum neutrophilum (strain DSM 2338 / JCM 9278 / NBRC 100436 / V24Sta)</name>
    <name type="common">Thermoproteus neutrophilus</name>
    <dbReference type="NCBI Taxonomy" id="444157"/>
    <lineage>
        <taxon>Archaea</taxon>
        <taxon>Thermoproteota</taxon>
        <taxon>Thermoprotei</taxon>
        <taxon>Thermoproteales</taxon>
        <taxon>Thermoproteaceae</taxon>
        <taxon>Pyrobaculum</taxon>
    </lineage>
</organism>
<proteinExistence type="inferred from homology"/>
<feature type="chain" id="PRO_1000129790" description="Glutamyl-tRNA(Gln) amidotransferase subunit E">
    <location>
        <begin position="1"/>
        <end position="607"/>
    </location>
</feature>
<feature type="region of interest" description="Disordered" evidence="2">
    <location>
        <begin position="399"/>
        <end position="428"/>
    </location>
</feature>
<sequence>MDYRSLGLKTGLEIHIQLNTRRKLFCHCPPVLRDDEPHFRLERRLHVSVSELGAVDPAVMWEVRKRRRYVYEGYRDTTCLVELDEEPPHLPDEEALATAVAVAKMFNAKLFDEIHVMRKTVVDGSNVSGFQRTMLVAYGGRAKILGYDIGVETIALEEDAARKIAEEGKTVIYRLDRLGVPLIEIATEPMTYTPQQVEEVAWIIGYSVKITGRAKRGLGTVRQDVNVSIAGGAKTEIKGVPDLSLIPKVIEYEVQRQLNLLRIAEELKRRGVGRVEPSLVDVTQAFANTKSKVVKRVLEAGGRVVALKTPGFQKLLGAEVQPGRRFGTELADYVRAWTELGGLLHSDELPGYGITAEEVREVAARAGAESFVLLMGTDERELAEAAAVVAERLNAAPRGVPEETRGANPDGTTRFLRPRPGAARMYPETDIPPVKITFEILRKAEEVAKASIEGKLAELTSMGLSRDMALQLIKSPHLEKFEDLVAKYKVPPQQIATILLNVSKALAREGVEVTDEKIASVLDALAKRVITKEAVEEVLRNMKAGESAEEAARRLGLLRMPYDEVKKVVEEVVKAVGREKALGEVMRRYRGRVDVEDVKRAISEIHF</sequence>
<dbReference type="EC" id="6.3.5.-" evidence="1"/>
<dbReference type="EMBL" id="CP001014">
    <property type="protein sequence ID" value="ACB40643.1"/>
    <property type="molecule type" value="Genomic_DNA"/>
</dbReference>
<dbReference type="RefSeq" id="WP_012351062.1">
    <property type="nucleotide sequence ID" value="NC_010525.1"/>
</dbReference>
<dbReference type="SMR" id="B1YAJ4"/>
<dbReference type="STRING" id="444157.Tneu_1725"/>
<dbReference type="GeneID" id="6165010"/>
<dbReference type="KEGG" id="tne:Tneu_1725"/>
<dbReference type="eggNOG" id="arCOG01719">
    <property type="taxonomic scope" value="Archaea"/>
</dbReference>
<dbReference type="HOGENOM" id="CLU_030702_0_0_2"/>
<dbReference type="OrthoDB" id="7316at2157"/>
<dbReference type="Proteomes" id="UP000001694">
    <property type="component" value="Chromosome"/>
</dbReference>
<dbReference type="GO" id="GO:0005737">
    <property type="term" value="C:cytoplasm"/>
    <property type="evidence" value="ECO:0007669"/>
    <property type="project" value="InterPro"/>
</dbReference>
<dbReference type="GO" id="GO:0004812">
    <property type="term" value="F:aminoacyl-tRNA ligase activity"/>
    <property type="evidence" value="ECO:0007669"/>
    <property type="project" value="InterPro"/>
</dbReference>
<dbReference type="GO" id="GO:0005524">
    <property type="term" value="F:ATP binding"/>
    <property type="evidence" value="ECO:0007669"/>
    <property type="project" value="UniProtKB-KW"/>
</dbReference>
<dbReference type="GO" id="GO:0050567">
    <property type="term" value="F:glutaminyl-tRNA synthase (glutamine-hydrolyzing) activity"/>
    <property type="evidence" value="ECO:0007669"/>
    <property type="project" value="UniProtKB-UniRule"/>
</dbReference>
<dbReference type="GO" id="GO:0070681">
    <property type="term" value="P:glutaminyl-tRNAGln biosynthesis via transamidation"/>
    <property type="evidence" value="ECO:0007669"/>
    <property type="project" value="TreeGrafter"/>
</dbReference>
<dbReference type="GO" id="GO:0006412">
    <property type="term" value="P:translation"/>
    <property type="evidence" value="ECO:0007669"/>
    <property type="project" value="UniProtKB-UniRule"/>
</dbReference>
<dbReference type="Gene3D" id="3.30.1360.30">
    <property type="entry name" value="GAD-like domain"/>
    <property type="match status" value="1"/>
</dbReference>
<dbReference type="Gene3D" id="1.10.150.380">
    <property type="entry name" value="GatB domain, N-terminal subdomain"/>
    <property type="match status" value="1"/>
</dbReference>
<dbReference type="HAMAP" id="MF_00588">
    <property type="entry name" value="GatE"/>
    <property type="match status" value="1"/>
</dbReference>
<dbReference type="InterPro" id="IPR017959">
    <property type="entry name" value="Asn/Gln-tRNA_amidoTrfase_suB/E"/>
</dbReference>
<dbReference type="InterPro" id="IPR006075">
    <property type="entry name" value="Asn/Gln-tRNA_Trfase_suB/E_cat"/>
</dbReference>
<dbReference type="InterPro" id="IPR018027">
    <property type="entry name" value="Asn/Gln_amidotransferase"/>
</dbReference>
<dbReference type="InterPro" id="IPR003789">
    <property type="entry name" value="Asn/Gln_tRNA_amidoTrase-B-like"/>
</dbReference>
<dbReference type="InterPro" id="IPR004115">
    <property type="entry name" value="GAD-like_sf"/>
</dbReference>
<dbReference type="InterPro" id="IPR029351">
    <property type="entry name" value="GAD_dom"/>
</dbReference>
<dbReference type="InterPro" id="IPR042114">
    <property type="entry name" value="GatB_C_1"/>
</dbReference>
<dbReference type="InterPro" id="IPR004414">
    <property type="entry name" value="GatE"/>
</dbReference>
<dbReference type="InterPro" id="IPR017958">
    <property type="entry name" value="Gln-tRNA_amidoTrfase_suB_CS"/>
</dbReference>
<dbReference type="InterPro" id="IPR014746">
    <property type="entry name" value="Gln_synth/guanido_kin_cat_dom"/>
</dbReference>
<dbReference type="NCBIfam" id="TIGR00134">
    <property type="entry name" value="gatE_arch"/>
    <property type="match status" value="1"/>
</dbReference>
<dbReference type="NCBIfam" id="NF003107">
    <property type="entry name" value="PRK04028.1"/>
    <property type="match status" value="1"/>
</dbReference>
<dbReference type="PANTHER" id="PTHR11659">
    <property type="entry name" value="GLUTAMYL-TRNA GLN AMIDOTRANSFERASE SUBUNIT B MITOCHONDRIAL AND PROKARYOTIC PET112-RELATED"/>
    <property type="match status" value="1"/>
</dbReference>
<dbReference type="PANTHER" id="PTHR11659:SF2">
    <property type="entry name" value="GLUTAMYL-TRNA(GLN) AMIDOTRANSFERASE SUBUNIT E"/>
    <property type="match status" value="1"/>
</dbReference>
<dbReference type="Pfam" id="PF02938">
    <property type="entry name" value="GAD"/>
    <property type="match status" value="1"/>
</dbReference>
<dbReference type="Pfam" id="PF02934">
    <property type="entry name" value="GatB_N"/>
    <property type="match status" value="1"/>
</dbReference>
<dbReference type="Pfam" id="PF02637">
    <property type="entry name" value="GatB_Yqey"/>
    <property type="match status" value="1"/>
</dbReference>
<dbReference type="SMART" id="SM00845">
    <property type="entry name" value="GatB_Yqey"/>
    <property type="match status" value="1"/>
</dbReference>
<dbReference type="SUPFAM" id="SSF55261">
    <property type="entry name" value="GAD domain-like"/>
    <property type="match status" value="1"/>
</dbReference>
<dbReference type="SUPFAM" id="SSF89095">
    <property type="entry name" value="GatB/YqeY motif"/>
    <property type="match status" value="1"/>
</dbReference>
<dbReference type="SUPFAM" id="SSF55931">
    <property type="entry name" value="Glutamine synthetase/guanido kinase"/>
    <property type="match status" value="1"/>
</dbReference>
<dbReference type="PROSITE" id="PS01234">
    <property type="entry name" value="GATB"/>
    <property type="match status" value="1"/>
</dbReference>
<gene>
    <name evidence="1" type="primary">gatE</name>
    <name type="ordered locus">Tneu_1725</name>
</gene>
<name>GATE_PYRNV</name>
<keyword id="KW-0067">ATP-binding</keyword>
<keyword id="KW-0436">Ligase</keyword>
<keyword id="KW-0547">Nucleotide-binding</keyword>
<keyword id="KW-0648">Protein biosynthesis</keyword>
<protein>
    <recommendedName>
        <fullName evidence="1">Glutamyl-tRNA(Gln) amidotransferase subunit E</fullName>
        <shortName evidence="1">Glu-ADT subunit E</shortName>
        <ecNumber evidence="1">6.3.5.-</ecNumber>
    </recommendedName>
</protein>
<reference key="1">
    <citation type="submission" date="2008-03" db="EMBL/GenBank/DDBJ databases">
        <title>Complete sequence of Thermoproteus neutrophilus V24Sta.</title>
        <authorList>
            <consortium name="US DOE Joint Genome Institute"/>
            <person name="Copeland A."/>
            <person name="Lucas S."/>
            <person name="Lapidus A."/>
            <person name="Glavina del Rio T."/>
            <person name="Dalin E."/>
            <person name="Tice H."/>
            <person name="Bruce D."/>
            <person name="Goodwin L."/>
            <person name="Pitluck S."/>
            <person name="Sims D."/>
            <person name="Brettin T."/>
            <person name="Detter J.C."/>
            <person name="Han C."/>
            <person name="Kuske C.R."/>
            <person name="Schmutz J."/>
            <person name="Larimer F."/>
            <person name="Land M."/>
            <person name="Hauser L."/>
            <person name="Kyrpides N."/>
            <person name="Mikhailova N."/>
            <person name="Biddle J.F."/>
            <person name="Zhang Z."/>
            <person name="Fitz-Gibbon S.T."/>
            <person name="Lowe T.M."/>
            <person name="Saltikov C."/>
            <person name="House C.H."/>
            <person name="Richardson P."/>
        </authorList>
    </citation>
    <scope>NUCLEOTIDE SEQUENCE [LARGE SCALE GENOMIC DNA]</scope>
    <source>
        <strain>DSM 2338 / JCM 9278 / NBRC 100436 / V24Sta</strain>
    </source>
</reference>